<feature type="chain" id="PRO_0000240334" description="ABC transporter A family member 12">
    <location>
        <begin position="1"/>
        <end position="917"/>
    </location>
</feature>
<feature type="transmembrane region" description="Helical" evidence="1">
    <location>
        <begin position="34"/>
        <end position="54"/>
    </location>
</feature>
<feature type="transmembrane region" description="Helical" evidence="1">
    <location>
        <begin position="323"/>
        <end position="343"/>
    </location>
</feature>
<feature type="transmembrane region" description="Helical" evidence="1">
    <location>
        <begin position="377"/>
        <end position="397"/>
    </location>
</feature>
<feature type="transmembrane region" description="Helical" evidence="1">
    <location>
        <begin position="409"/>
        <end position="429"/>
    </location>
</feature>
<feature type="transmembrane region" description="Helical" evidence="1">
    <location>
        <begin position="435"/>
        <end position="455"/>
    </location>
</feature>
<feature type="transmembrane region" description="Helical" evidence="1">
    <location>
        <begin position="508"/>
        <end position="528"/>
    </location>
</feature>
<feature type="domain" description="ABC transporter" evidence="2">
    <location>
        <begin position="595"/>
        <end position="832"/>
    </location>
</feature>
<feature type="binding site" evidence="2">
    <location>
        <begin position="633"/>
        <end position="640"/>
    </location>
    <ligand>
        <name>ATP</name>
        <dbReference type="ChEBI" id="CHEBI:30616"/>
    </ligand>
</feature>
<accession>Q9FLT8</accession>
<accession>F4K3L4</accession>
<comment type="subcellular location">
    <subcellularLocation>
        <location evidence="3">Membrane</location>
        <topology evidence="3">Multi-pass membrane protein</topology>
    </subcellularLocation>
</comment>
<comment type="similarity">
    <text evidence="3">Belongs to the ABC transporter superfamily. ABCA family. CPR flippase (TC 3.A.1.211) subfamily.</text>
</comment>
<protein>
    <recommendedName>
        <fullName>ABC transporter A family member 12</fullName>
        <shortName>ABC transporter ABCA.12</shortName>
        <shortName>AtABCA12</shortName>
    </recommendedName>
    <alternativeName>
        <fullName>Putative ABC2 homolog 16</fullName>
    </alternativeName>
</protein>
<organism>
    <name type="scientific">Arabidopsis thaliana</name>
    <name type="common">Mouse-ear cress</name>
    <dbReference type="NCBI Taxonomy" id="3702"/>
    <lineage>
        <taxon>Eukaryota</taxon>
        <taxon>Viridiplantae</taxon>
        <taxon>Streptophyta</taxon>
        <taxon>Embryophyta</taxon>
        <taxon>Tracheophyta</taxon>
        <taxon>Spermatophyta</taxon>
        <taxon>Magnoliopsida</taxon>
        <taxon>eudicotyledons</taxon>
        <taxon>Gunneridae</taxon>
        <taxon>Pentapetalae</taxon>
        <taxon>rosids</taxon>
        <taxon>malvids</taxon>
        <taxon>Brassicales</taxon>
        <taxon>Brassicaceae</taxon>
        <taxon>Camelineae</taxon>
        <taxon>Arabidopsis</taxon>
    </lineage>
</organism>
<dbReference type="EMBL" id="AB010069">
    <property type="protein sequence ID" value="BAB10070.1"/>
    <property type="molecule type" value="Genomic_DNA"/>
</dbReference>
<dbReference type="EMBL" id="AB012239">
    <property type="protein sequence ID" value="BAB10070.1"/>
    <property type="status" value="JOINED"/>
    <property type="molecule type" value="Genomic_DNA"/>
</dbReference>
<dbReference type="EMBL" id="CP002688">
    <property type="protein sequence ID" value="AED97507.2"/>
    <property type="molecule type" value="Genomic_DNA"/>
</dbReference>
<dbReference type="RefSeq" id="NP_001318859.1">
    <property type="nucleotide sequence ID" value="NM_001345489.1"/>
</dbReference>
<dbReference type="SMR" id="Q9FLT8"/>
<dbReference type="BioGRID" id="21536">
    <property type="interactions" value="2"/>
</dbReference>
<dbReference type="FunCoup" id="Q9FLT8">
    <property type="interactions" value="7"/>
</dbReference>
<dbReference type="IntAct" id="Q9FLT8">
    <property type="interactions" value="2"/>
</dbReference>
<dbReference type="STRING" id="3702.Q9FLT8"/>
<dbReference type="TCDB" id="3.A.1.211.12">
    <property type="family name" value="the atp-binding cassette (abc) superfamily"/>
</dbReference>
<dbReference type="iPTMnet" id="Q9FLT8"/>
<dbReference type="PaxDb" id="3702-AT5G61700.1"/>
<dbReference type="ProteomicsDB" id="245097"/>
<dbReference type="EnsemblPlants" id="AT5G61700.1">
    <property type="protein sequence ID" value="AT5G61700.1"/>
    <property type="gene ID" value="AT5G61700"/>
</dbReference>
<dbReference type="GeneID" id="836292"/>
<dbReference type="Gramene" id="AT5G61700.1">
    <property type="protein sequence ID" value="AT5G61700.1"/>
    <property type="gene ID" value="AT5G61700"/>
</dbReference>
<dbReference type="KEGG" id="ath:AT5G61700"/>
<dbReference type="Araport" id="AT5G61700"/>
<dbReference type="TAIR" id="AT5G61700">
    <property type="gene designation" value="ABCA12"/>
</dbReference>
<dbReference type="eggNOG" id="KOG0059">
    <property type="taxonomic scope" value="Eukaryota"/>
</dbReference>
<dbReference type="InParanoid" id="Q9FLT8"/>
<dbReference type="OMA" id="MRRSCTM"/>
<dbReference type="PhylomeDB" id="Q9FLT8"/>
<dbReference type="BioCyc" id="ARA:AT5G61700-MONOMER"/>
<dbReference type="PRO" id="PR:Q9FLT8"/>
<dbReference type="Proteomes" id="UP000006548">
    <property type="component" value="Chromosome 5"/>
</dbReference>
<dbReference type="ExpressionAtlas" id="Q9FLT8">
    <property type="expression patterns" value="baseline and differential"/>
</dbReference>
<dbReference type="GO" id="GO:0016020">
    <property type="term" value="C:membrane"/>
    <property type="evidence" value="ECO:0007669"/>
    <property type="project" value="UniProtKB-SubCell"/>
</dbReference>
<dbReference type="GO" id="GO:0140359">
    <property type="term" value="F:ABC-type transporter activity"/>
    <property type="evidence" value="ECO:0007669"/>
    <property type="project" value="InterPro"/>
</dbReference>
<dbReference type="GO" id="GO:0005524">
    <property type="term" value="F:ATP binding"/>
    <property type="evidence" value="ECO:0007669"/>
    <property type="project" value="UniProtKB-KW"/>
</dbReference>
<dbReference type="GO" id="GO:0016887">
    <property type="term" value="F:ATP hydrolysis activity"/>
    <property type="evidence" value="ECO:0007669"/>
    <property type="project" value="InterPro"/>
</dbReference>
<dbReference type="CDD" id="cd03263">
    <property type="entry name" value="ABC_subfamily_A"/>
    <property type="match status" value="1"/>
</dbReference>
<dbReference type="FunFam" id="3.40.50.300:FF:000633">
    <property type="entry name" value="ABC transporter A family member 7"/>
    <property type="match status" value="1"/>
</dbReference>
<dbReference type="Gene3D" id="3.40.50.300">
    <property type="entry name" value="P-loop containing nucleotide triphosphate hydrolases"/>
    <property type="match status" value="1"/>
</dbReference>
<dbReference type="InterPro" id="IPR003593">
    <property type="entry name" value="AAA+_ATPase"/>
</dbReference>
<dbReference type="InterPro" id="IPR013525">
    <property type="entry name" value="ABC2_TM"/>
</dbReference>
<dbReference type="InterPro" id="IPR003439">
    <property type="entry name" value="ABC_transporter-like_ATP-bd"/>
</dbReference>
<dbReference type="InterPro" id="IPR017871">
    <property type="entry name" value="ABC_transporter-like_CS"/>
</dbReference>
<dbReference type="InterPro" id="IPR026082">
    <property type="entry name" value="ABCA"/>
</dbReference>
<dbReference type="InterPro" id="IPR027417">
    <property type="entry name" value="P-loop_NTPase"/>
</dbReference>
<dbReference type="PANTHER" id="PTHR19229:SF236">
    <property type="entry name" value="ABC TRANSPORTER A FAMILY MEMBER 12"/>
    <property type="match status" value="1"/>
</dbReference>
<dbReference type="PANTHER" id="PTHR19229">
    <property type="entry name" value="ATP-BINDING CASSETTE TRANSPORTER SUBFAMILY A ABCA"/>
    <property type="match status" value="1"/>
</dbReference>
<dbReference type="Pfam" id="PF12698">
    <property type="entry name" value="ABC2_membrane_3"/>
    <property type="match status" value="1"/>
</dbReference>
<dbReference type="Pfam" id="PF00005">
    <property type="entry name" value="ABC_tran"/>
    <property type="match status" value="1"/>
</dbReference>
<dbReference type="Pfam" id="PF24526">
    <property type="entry name" value="ABCA12_C"/>
    <property type="match status" value="1"/>
</dbReference>
<dbReference type="SMART" id="SM00382">
    <property type="entry name" value="AAA"/>
    <property type="match status" value="1"/>
</dbReference>
<dbReference type="SUPFAM" id="SSF52540">
    <property type="entry name" value="P-loop containing nucleoside triphosphate hydrolases"/>
    <property type="match status" value="1"/>
</dbReference>
<dbReference type="PROSITE" id="PS00211">
    <property type="entry name" value="ABC_TRANSPORTER_1"/>
    <property type="match status" value="1"/>
</dbReference>
<dbReference type="PROSITE" id="PS50893">
    <property type="entry name" value="ABC_TRANSPORTER_2"/>
    <property type="match status" value="1"/>
</dbReference>
<evidence type="ECO:0000255" key="1"/>
<evidence type="ECO:0000255" key="2">
    <source>
        <dbReference type="PROSITE-ProRule" id="PRU00434"/>
    </source>
</evidence>
<evidence type="ECO:0000305" key="3"/>
<reference key="1">
    <citation type="journal article" date="1998" name="DNA Res.">
        <title>Structural analysis of Arabidopsis thaliana chromosome 5. IV. Sequence features of the regions of 1,456,315 bp covered by nineteen physically assigned P1 and TAC clones.</title>
        <authorList>
            <person name="Sato S."/>
            <person name="Kaneko T."/>
            <person name="Kotani H."/>
            <person name="Nakamura Y."/>
            <person name="Asamizu E."/>
            <person name="Miyajima N."/>
            <person name="Tabata S."/>
        </authorList>
    </citation>
    <scope>NUCLEOTIDE SEQUENCE [LARGE SCALE GENOMIC DNA]</scope>
    <source>
        <strain>cv. Columbia</strain>
    </source>
</reference>
<reference key="2">
    <citation type="journal article" date="1998" name="DNA Res.">
        <title>Structural analysis of Arabidopsis thaliana chromosome 5. VI. Sequence features of the regions of 1,367,185 bp covered by 19 physically assigned P1 and TAC clones.</title>
        <authorList>
            <person name="Kotani H."/>
            <person name="Nakamura Y."/>
            <person name="Sato S."/>
            <person name="Asamizu E."/>
            <person name="Kaneko T."/>
            <person name="Miyajima N."/>
            <person name="Tabata S."/>
        </authorList>
    </citation>
    <scope>NUCLEOTIDE SEQUENCE [LARGE SCALE GENOMIC DNA]</scope>
    <source>
        <strain>cv. Columbia</strain>
    </source>
</reference>
<reference key="3">
    <citation type="journal article" date="2017" name="Plant J.">
        <title>Araport11: a complete reannotation of the Arabidopsis thaliana reference genome.</title>
        <authorList>
            <person name="Cheng C.Y."/>
            <person name="Krishnakumar V."/>
            <person name="Chan A.P."/>
            <person name="Thibaud-Nissen F."/>
            <person name="Schobel S."/>
            <person name="Town C.D."/>
        </authorList>
    </citation>
    <scope>GENOME REANNOTATION</scope>
    <source>
        <strain>cv. Columbia</strain>
    </source>
</reference>
<reference key="4">
    <citation type="journal article" date="2001" name="J. Biol. Chem.">
        <title>The Arabidopsis thaliana ABC protein superfamily, a complete inventory.</title>
        <authorList>
            <person name="Sanchez-Fernandez R."/>
            <person name="Davies T.G."/>
            <person name="Coleman J.O."/>
            <person name="Rea P.A."/>
        </authorList>
    </citation>
    <scope>GENE FAMILY</scope>
    <scope>NOMENCLATURE</scope>
</reference>
<reference key="5">
    <citation type="journal article" date="2008" name="Trends Plant Sci.">
        <title>Plant ABC proteins - a unified nomenclature and updated inventory.</title>
        <authorList>
            <person name="Verrier P.J."/>
            <person name="Bird D."/>
            <person name="Burla B."/>
            <person name="Dassa E."/>
            <person name="Forestier C."/>
            <person name="Geisler M."/>
            <person name="Klein M."/>
            <person name="Kolukisaoglu H.U."/>
            <person name="Lee Y."/>
            <person name="Martinoia E."/>
            <person name="Murphy A."/>
            <person name="Rea P.A."/>
            <person name="Samuels L."/>
            <person name="Schulz B."/>
            <person name="Spalding E.J."/>
            <person name="Yazaki K."/>
            <person name="Theodoulou F.L."/>
        </authorList>
    </citation>
    <scope>GENE FAMILY</scope>
    <scope>NOMENCLATURE</scope>
</reference>
<name>AB12A_ARATH</name>
<keyword id="KW-0067">ATP-binding</keyword>
<keyword id="KW-0472">Membrane</keyword>
<keyword id="KW-0547">Nucleotide-binding</keyword>
<keyword id="KW-1185">Reference proteome</keyword>
<keyword id="KW-0812">Transmembrane</keyword>
<keyword id="KW-1133">Transmembrane helix</keyword>
<keyword id="KW-0813">Transport</keyword>
<proteinExistence type="inferred from homology"/>
<sequence>MVNPSPASFWTQANALLRKNLTYQRKHIWTNVRLILVPLFLCLILLAIQQVLDALMKGVSDMSNCGGNVTLPGGICPIPNPPSLPPMLQIPQHELRSVKTDFFSYKDLPDKLCRETGSCPVTILFTGDKLPLGKALSANIFSTSFVVNSSDLLPTLANNVLGSTEAAGEDNYEDPGIASDLPIYSIQPSCSANSTWPLSLGQIQTAVKCVQGLCLWRNNSVEVNDELFKGSWRGNPAGMPNEIVAAYDLMSTDRKNFNVTIWYNSTYNDEFATGQALKLVRVPRSINLISNAYLKFLKGPGTRILFEFLKEVPKEETKMNQDIASLLGPLFFTWVVLLLFPVILTSLVYEKQERLRIIMKMHGLGDGPYWMISYAYFLTISMLYVISLVGFGSAIGLKYFRRNDYSIQFVFYFIYSNLQISLAFLVSSIFSKVKTVTVIAYILVYGTGLLGSFLFQKMIETQSFPEEWILAMELYPGFSLYRGLYEFSQYASRGNGMKWQDLSDSGMGEVFCIMSVEWFLALIVAYYIDQVFTSGKHPFFFLVNLFKSPSSLPRRPTVQRLDSKRVFIDMDKHDVTQERESVQKLRNEGSTGHAILCDNLKKVYPGRDGNPPKMAVRGLYLSVSSGECFGMLGPNGAGKTSFISMMTGLLKPSSGTALVQGLDICKDMNKVYTSMGVCPQHDLLWETLTGREHLLFYGRLKNIKGSDLTQAVEESLKSVSLYDGGVGDKPAGNYSGGMKRRLSVAISLIGNPKVVYLDEPSTGLDPASRKNLWNVIKRAKQNTAIILTTHSMEEAEFLCDRLGIFVDGGLQCIGNSKELKSRYGGSYVFTMTTSSKHEEEVERLVESVSPNAKKIYHLAGTQKFELPKQEVRIAEVFRAVEKAKANFTVFAWGLADTTLEDVFIKVARTAQAFISLS</sequence>
<gene>
    <name type="primary">ABCA12</name>
    <name type="synonym">ATH16</name>
    <name type="ordered locus">At5g61700</name>
    <name type="ORF">K11J9.23</name>
    <name type="ORF">MAC9.1</name>
</gene>